<accession>O64411</accession>
<accession>Q546R6</accession>
<evidence type="ECO:0000269" key="1">
    <source>
    </source>
</evidence>
<evidence type="ECO:0000269" key="2">
    <source>
    </source>
</evidence>
<evidence type="ECO:0000269" key="3">
    <source>
    </source>
</evidence>
<evidence type="ECO:0000269" key="4">
    <source>
    </source>
</evidence>
<evidence type="ECO:0000269" key="5">
    <source>
    </source>
</evidence>
<evidence type="ECO:0000269" key="6">
    <source ref="10"/>
</evidence>
<evidence type="ECO:0000269" key="7">
    <source ref="3"/>
</evidence>
<evidence type="ECO:0000269" key="8">
    <source ref="4"/>
</evidence>
<evidence type="ECO:0000303" key="9">
    <source>
    </source>
</evidence>
<evidence type="ECO:0000303" key="10">
    <source>
    </source>
</evidence>
<evidence type="ECO:0000303" key="11">
    <source ref="2"/>
</evidence>
<evidence type="ECO:0000305" key="12"/>
<evidence type="ECO:0000305" key="13">
    <source ref="3"/>
</evidence>
<evidence type="ECO:0000305" key="14">
    <source ref="4"/>
</evidence>
<evidence type="ECO:0007744" key="15">
    <source>
        <dbReference type="PDB" id="1B5Q"/>
    </source>
</evidence>
<evidence type="ECO:0007744" key="16">
    <source>
        <dbReference type="PDB" id="1H82"/>
    </source>
</evidence>
<evidence type="ECO:0007744" key="17">
    <source>
        <dbReference type="PDB" id="3KU9"/>
    </source>
</evidence>
<evidence type="ECO:0007744" key="18">
    <source>
        <dbReference type="PDB" id="3L1R"/>
    </source>
</evidence>
<evidence type="ECO:0007829" key="19">
    <source>
        <dbReference type="PDB" id="1B37"/>
    </source>
</evidence>
<evidence type="ECO:0007829" key="20">
    <source>
        <dbReference type="PDB" id="1B5Q"/>
    </source>
</evidence>
<evidence type="ECO:0007829" key="21">
    <source>
        <dbReference type="PDB" id="3KPF"/>
    </source>
</evidence>
<evidence type="ECO:0007829" key="22">
    <source>
        <dbReference type="PDB" id="3KU9"/>
    </source>
</evidence>
<name>PAO1_MAIZE</name>
<proteinExistence type="evidence at protein level"/>
<feature type="signal peptide" evidence="5">
    <location>
        <begin position="1"/>
        <end position="28"/>
    </location>
</feature>
<feature type="chain" id="PRO_0000001712" description="Polyamine oxidase 1">
    <location>
        <begin position="29"/>
        <end position="500"/>
    </location>
</feature>
<feature type="binding site" evidence="1 2 15 16">
    <location>
        <begin position="42"/>
        <end position="43"/>
    </location>
    <ligand>
        <name>FAD</name>
        <dbReference type="ChEBI" id="CHEBI:57692"/>
    </ligand>
</feature>
<feature type="binding site" evidence="1 2 15 16">
    <location>
        <position position="63"/>
    </location>
    <ligand>
        <name>FAD</name>
        <dbReference type="ChEBI" id="CHEBI:57692"/>
    </ligand>
</feature>
<feature type="binding site" evidence="1 2 15 16">
    <location>
        <position position="71"/>
    </location>
    <ligand>
        <name>FAD</name>
        <dbReference type="ChEBI" id="CHEBI:57692"/>
    </ligand>
</feature>
<feature type="binding site" evidence="1 2 15 16">
    <location>
        <begin position="87"/>
        <end position="88"/>
    </location>
    <ligand>
        <name>FAD</name>
        <dbReference type="ChEBI" id="CHEBI:57692"/>
    </ligand>
</feature>
<feature type="binding site" evidence="6 17 18">
    <location>
        <position position="90"/>
    </location>
    <ligand>
        <name>substrate</name>
    </ligand>
</feature>
<feature type="binding site" evidence="6 17 18">
    <location>
        <position position="198"/>
    </location>
    <ligand>
        <name>substrate</name>
    </ligand>
</feature>
<feature type="binding site" evidence="1 2 15 16">
    <location>
        <position position="265"/>
    </location>
    <ligand>
        <name>FAD</name>
        <dbReference type="ChEBI" id="CHEBI:57692"/>
    </ligand>
</feature>
<feature type="binding site" evidence="1 2 15 16">
    <location>
        <position position="427"/>
    </location>
    <ligand>
        <name>FAD</name>
        <dbReference type="ChEBI" id="CHEBI:57692"/>
    </ligand>
</feature>
<feature type="binding site" evidence="1 2 15 16">
    <location>
        <position position="458"/>
    </location>
    <ligand>
        <name>FAD</name>
        <dbReference type="ChEBI" id="CHEBI:57692"/>
    </ligand>
</feature>
<feature type="binding site" evidence="6 17 18">
    <location>
        <position position="466"/>
    </location>
    <ligand>
        <name>substrate</name>
    </ligand>
</feature>
<feature type="binding site" evidence="1 2 15 16">
    <location>
        <begin position="467"/>
        <end position="468"/>
    </location>
    <ligand>
        <name>FAD</name>
        <dbReference type="ChEBI" id="CHEBI:57692"/>
    </ligand>
</feature>
<feature type="glycosylation site" description="N-linked (GlcNAc...) asparagine" evidence="1 2 15 16">
    <location>
        <position position="105"/>
    </location>
</feature>
<feature type="disulfide bond" evidence="1 2 15 16">
    <location>
        <begin position="485"/>
        <end position="491"/>
    </location>
</feature>
<feature type="mutagenesis site" description="Abolishes enzymatic activity." evidence="4">
    <original>K</original>
    <variation>M</variation>
    <location>
        <position position="328"/>
    </location>
</feature>
<feature type="strand" evidence="19">
    <location>
        <begin position="35"/>
        <end position="38"/>
    </location>
</feature>
<feature type="helix" evidence="19">
    <location>
        <begin position="42"/>
        <end position="53"/>
    </location>
</feature>
<feature type="strand" evidence="19">
    <location>
        <begin position="59"/>
        <end position="62"/>
    </location>
</feature>
<feature type="strand" evidence="19">
    <location>
        <begin position="64"/>
        <end position="69"/>
    </location>
</feature>
<feature type="strand" evidence="19">
    <location>
        <begin position="74"/>
        <end position="77"/>
    </location>
</feature>
<feature type="strand" evidence="19">
    <location>
        <begin position="80"/>
        <end position="85"/>
    </location>
</feature>
<feature type="strand" evidence="19">
    <location>
        <begin position="88"/>
        <end position="96"/>
    </location>
</feature>
<feature type="helix" evidence="19">
    <location>
        <begin position="100"/>
        <end position="105"/>
    </location>
</feature>
<feature type="strand" evidence="19">
    <location>
        <begin position="112"/>
        <end position="114"/>
    </location>
</feature>
<feature type="helix" evidence="19">
    <location>
        <begin position="120"/>
        <end position="122"/>
    </location>
</feature>
<feature type="strand" evidence="20">
    <location>
        <begin position="124"/>
        <end position="126"/>
    </location>
</feature>
<feature type="strand" evidence="19">
    <location>
        <begin position="127"/>
        <end position="131"/>
    </location>
</feature>
<feature type="helix" evidence="19">
    <location>
        <begin position="134"/>
        <end position="156"/>
    </location>
</feature>
<feature type="helix" evidence="19">
    <location>
        <begin position="168"/>
        <end position="176"/>
    </location>
</feature>
<feature type="strand" evidence="19">
    <location>
        <begin position="178"/>
        <end position="181"/>
    </location>
</feature>
<feature type="helix" evidence="19">
    <location>
        <begin position="185"/>
        <end position="194"/>
    </location>
</feature>
<feature type="helix" evidence="19">
    <location>
        <begin position="196"/>
        <end position="199"/>
    </location>
</feature>
<feature type="turn" evidence="19">
    <location>
        <begin position="203"/>
        <end position="205"/>
    </location>
</feature>
<feature type="strand" evidence="19">
    <location>
        <begin position="206"/>
        <end position="208"/>
    </location>
</feature>
<feature type="turn" evidence="19">
    <location>
        <begin position="209"/>
        <end position="211"/>
    </location>
</feature>
<feature type="helix" evidence="19">
    <location>
        <begin position="215"/>
        <end position="220"/>
    </location>
</feature>
<feature type="strand" evidence="19">
    <location>
        <begin position="222"/>
        <end position="227"/>
    </location>
</feature>
<feature type="helix" evidence="19">
    <location>
        <begin position="235"/>
        <end position="242"/>
    </location>
</feature>
<feature type="turn" evidence="19">
    <location>
        <begin position="249"/>
        <end position="251"/>
    </location>
</feature>
<feature type="strand" evidence="19">
    <location>
        <begin position="259"/>
        <end position="262"/>
    </location>
</feature>
<feature type="strand" evidence="19">
    <location>
        <begin position="265"/>
        <end position="270"/>
    </location>
</feature>
<feature type="strand" evidence="19">
    <location>
        <begin position="275"/>
        <end position="279"/>
    </location>
</feature>
<feature type="strand" evidence="19">
    <location>
        <begin position="284"/>
        <end position="292"/>
    </location>
</feature>
<feature type="helix" evidence="19">
    <location>
        <begin position="296"/>
        <end position="300"/>
    </location>
</feature>
<feature type="strand" evidence="19">
    <location>
        <begin position="303"/>
        <end position="308"/>
    </location>
</feature>
<feature type="helix" evidence="19">
    <location>
        <begin position="312"/>
        <end position="320"/>
    </location>
</feature>
<feature type="strand" evidence="19">
    <location>
        <begin position="321"/>
        <end position="324"/>
    </location>
</feature>
<feature type="strand" evidence="19">
    <location>
        <begin position="326"/>
        <end position="332"/>
    </location>
</feature>
<feature type="strand" evidence="19">
    <location>
        <begin position="345"/>
        <end position="349"/>
    </location>
</feature>
<feature type="strand" evidence="22">
    <location>
        <begin position="352"/>
        <end position="357"/>
    </location>
</feature>
<feature type="strand" evidence="19">
    <location>
        <begin position="359"/>
        <end position="362"/>
    </location>
</feature>
<feature type="turn" evidence="19">
    <location>
        <begin position="364"/>
        <end position="366"/>
    </location>
</feature>
<feature type="strand" evidence="21">
    <location>
        <begin position="367"/>
        <end position="369"/>
    </location>
</feature>
<feature type="strand" evidence="19">
    <location>
        <begin position="372"/>
        <end position="378"/>
    </location>
</feature>
<feature type="helix" evidence="19">
    <location>
        <begin position="379"/>
        <end position="386"/>
    </location>
</feature>
<feature type="helix" evidence="19">
    <location>
        <begin position="390"/>
        <end position="404"/>
    </location>
</feature>
<feature type="strand" evidence="22">
    <location>
        <begin position="406"/>
        <end position="408"/>
    </location>
</feature>
<feature type="strand" evidence="19">
    <location>
        <begin position="414"/>
        <end position="417"/>
    </location>
</feature>
<feature type="turn" evidence="19">
    <location>
        <begin position="421"/>
        <end position="423"/>
    </location>
</feature>
<feature type="turn" evidence="19">
    <location>
        <begin position="425"/>
        <end position="427"/>
    </location>
</feature>
<feature type="strand" evidence="19">
    <location>
        <begin position="428"/>
        <end position="433"/>
    </location>
</feature>
<feature type="helix" evidence="19">
    <location>
        <begin position="440"/>
        <end position="447"/>
    </location>
</feature>
<feature type="strand" evidence="19">
    <location>
        <begin position="453"/>
        <end position="455"/>
    </location>
</feature>
<feature type="helix" evidence="19">
    <location>
        <begin position="458"/>
        <end position="460"/>
    </location>
</feature>
<feature type="turn" evidence="19">
    <location>
        <begin position="462"/>
        <end position="466"/>
    </location>
</feature>
<feature type="helix" evidence="19">
    <location>
        <begin position="468"/>
        <end position="488"/>
    </location>
</feature>
<comment type="function">
    <text evidence="4 8 14">Flavoenzyme involved in polyamine back-conversion (PubMed:16331971, Ref.4). Catalyzes the oxidation of the secondary amino group of polyamines, such as spermine, spermidine and their acetyl derivatives (PubMed:16331971, Ref.4). Plays an important role in the regulation of polyamine intracellular concentration (Probable).</text>
</comment>
<comment type="catalytic activity">
    <reaction evidence="8">
        <text>spermidine + O2 + H2O = 4-aminobutanal + propane-1,3-diamine + H2O2</text>
        <dbReference type="Rhea" id="RHEA:25820"/>
        <dbReference type="ChEBI" id="CHEBI:15377"/>
        <dbReference type="ChEBI" id="CHEBI:15379"/>
        <dbReference type="ChEBI" id="CHEBI:16240"/>
        <dbReference type="ChEBI" id="CHEBI:57484"/>
        <dbReference type="ChEBI" id="CHEBI:57834"/>
        <dbReference type="ChEBI" id="CHEBI:58264"/>
        <dbReference type="EC" id="1.5.3.14"/>
    </reaction>
</comment>
<comment type="catalytic activity">
    <reaction evidence="8">
        <text>N(8)-acetylspermidine + O2 + H2O = 4-acetamidobutanal + propane-1,3-diamine + H2O2</text>
        <dbReference type="Rhea" id="RHEA:25972"/>
        <dbReference type="ChEBI" id="CHEBI:7386"/>
        <dbReference type="ChEBI" id="CHEBI:15377"/>
        <dbReference type="ChEBI" id="CHEBI:15379"/>
        <dbReference type="ChEBI" id="CHEBI:16240"/>
        <dbReference type="ChEBI" id="CHEBI:57484"/>
        <dbReference type="ChEBI" id="CHEBI:58535"/>
        <dbReference type="EC" id="1.5.3.15"/>
    </reaction>
</comment>
<comment type="catalytic activity">
    <reaction evidence="8">
        <text>spermine + O2 + H2O = N-(3-aminopropyl)-4-aminobutanal + propane-1,3-diamine + H2O2</text>
        <dbReference type="Rhea" id="RHEA:25824"/>
        <dbReference type="ChEBI" id="CHEBI:15377"/>
        <dbReference type="ChEBI" id="CHEBI:15379"/>
        <dbReference type="ChEBI" id="CHEBI:16240"/>
        <dbReference type="ChEBI" id="CHEBI:45725"/>
        <dbReference type="ChEBI" id="CHEBI:57484"/>
        <dbReference type="ChEBI" id="CHEBI:58869"/>
        <dbReference type="EC" id="1.5.3.14"/>
    </reaction>
</comment>
<comment type="catalytic activity">
    <reaction evidence="8">
        <text>N(1)-acetylspermine + O2 + H2O = N-(3-acetamidopropyl)-4-aminobutanal + propane-1,3-diamine + H2O2</text>
        <dbReference type="Rhea" id="RHEA:25996"/>
        <dbReference type="ChEBI" id="CHEBI:15377"/>
        <dbReference type="ChEBI" id="CHEBI:15379"/>
        <dbReference type="ChEBI" id="CHEBI:16240"/>
        <dbReference type="ChEBI" id="CHEBI:57484"/>
        <dbReference type="ChEBI" id="CHEBI:58101"/>
        <dbReference type="ChEBI" id="CHEBI:58858"/>
        <dbReference type="EC" id="1.5.3.14"/>
    </reaction>
</comment>
<comment type="cofactor">
    <cofactor evidence="4 7">
        <name>FAD</name>
        <dbReference type="ChEBI" id="CHEBI:57692"/>
    </cofactor>
    <text evidence="13">Binds 1 FAD per subunit.</text>
</comment>
<comment type="biophysicochemical properties">
    <kinetics>
        <KM evidence="8">38 uM for spermine</KM>
        <KM evidence="8">40 uM for spermidine</KM>
        <KM evidence="8">62 uM for N(1)-acetylspermine</KM>
        <KM evidence="8">274 uM for N(1)-acetylspermidine</KM>
        <KM evidence="8">100 uM for dioxygen</KM>
        <Vmax evidence="8">6.0 umol/min/ug enzyme with spermine as substrate</Vmax>
        <Vmax evidence="8">70.0 umol/min/ug enzyme with spermidine as substrate</Vmax>
        <Vmax evidence="8">21.0 umol/min/ug enzyme with N(1)-acetylspermine as substrate</Vmax>
        <Vmax evidence="8">2.5 umol/min/ug enzyme with N(1)-acetylspermidine as substrate</Vmax>
    </kinetics>
    <phDependence>
        <text evidence="4 8">Optimum pH is 6.5.</text>
    </phDependence>
</comment>
<comment type="pathway">
    <text evidence="12">Amine and polyamine degradation; spermine degradation.</text>
</comment>
<comment type="subunit">
    <text evidence="7">Monomer.</text>
</comment>
<comment type="subcellular location">
    <subcellularLocation>
        <location evidence="3">Secreted</location>
        <location evidence="3">Extracellular space</location>
        <location evidence="3">Apoplast</location>
    </subcellularLocation>
    <subcellularLocation>
        <location evidence="3">Secreted</location>
        <location evidence="3">Cell wall</location>
    </subcellularLocation>
</comment>
<comment type="induction">
    <text evidence="3">Induced by light (at protein level) (PubMed:12586904). Down-regulated by auxin (at protein level) (PubMed:12586904).</text>
</comment>
<comment type="similarity">
    <text evidence="12">Belongs to the flavin monoamine oxidase family.</text>
</comment>
<organism>
    <name type="scientific">Zea mays</name>
    <name type="common">Maize</name>
    <dbReference type="NCBI Taxonomy" id="4577"/>
    <lineage>
        <taxon>Eukaryota</taxon>
        <taxon>Viridiplantae</taxon>
        <taxon>Streptophyta</taxon>
        <taxon>Embryophyta</taxon>
        <taxon>Tracheophyta</taxon>
        <taxon>Spermatophyta</taxon>
        <taxon>Magnoliopsida</taxon>
        <taxon>Liliopsida</taxon>
        <taxon>Poales</taxon>
        <taxon>Poaceae</taxon>
        <taxon>PACMAD clade</taxon>
        <taxon>Panicoideae</taxon>
        <taxon>Andropogonodae</taxon>
        <taxon>Andropogoneae</taxon>
        <taxon>Tripsacinae</taxon>
        <taxon>Zea</taxon>
    </lineage>
</organism>
<dbReference type="EC" id="1.5.3.14" evidence="8"/>
<dbReference type="EC" id="1.5.3.15" evidence="8"/>
<dbReference type="EMBL" id="AJ002204">
    <property type="protein sequence ID" value="CAA05249.1"/>
    <property type="molecule type" value="mRNA"/>
</dbReference>
<dbReference type="EMBL" id="AJ251568">
    <property type="protein sequence ID" value="CAC03739.1"/>
    <property type="molecule type" value="Genomic_DNA"/>
</dbReference>
<dbReference type="EMBL" id="AJ251018">
    <property type="protein sequence ID" value="CAC04001.1"/>
    <property type="molecule type" value="Genomic_DNA"/>
</dbReference>
<dbReference type="PIR" id="T03387">
    <property type="entry name" value="T03387"/>
</dbReference>
<dbReference type="RefSeq" id="NP_001105106.1">
    <property type="nucleotide sequence ID" value="NM_001111636.1"/>
</dbReference>
<dbReference type="PDB" id="1B37">
    <property type="method" value="X-ray"/>
    <property type="resolution" value="1.90 A"/>
    <property type="chains" value="A/B/C=29-500"/>
</dbReference>
<dbReference type="PDB" id="1B5Q">
    <property type="method" value="X-ray"/>
    <property type="resolution" value="1.90 A"/>
    <property type="chains" value="A/B/C=29-500"/>
</dbReference>
<dbReference type="PDB" id="1H81">
    <property type="method" value="X-ray"/>
    <property type="resolution" value="2.10 A"/>
    <property type="chains" value="A/B/C=29-500"/>
</dbReference>
<dbReference type="PDB" id="1H82">
    <property type="method" value="X-ray"/>
    <property type="resolution" value="1.90 A"/>
    <property type="chains" value="A/B/C=29-500"/>
</dbReference>
<dbReference type="PDB" id="1H83">
    <property type="method" value="X-ray"/>
    <property type="resolution" value="1.90 A"/>
    <property type="chains" value="A/B/C=29-500"/>
</dbReference>
<dbReference type="PDB" id="1H84">
    <property type="method" value="X-ray"/>
    <property type="resolution" value="2.00 A"/>
    <property type="chains" value="A/B/C=29-500"/>
</dbReference>
<dbReference type="PDB" id="1H86">
    <property type="method" value="X-ray"/>
    <property type="resolution" value="2.00 A"/>
    <property type="chains" value="A/B/C=29-500"/>
</dbReference>
<dbReference type="PDB" id="3KPF">
    <property type="method" value="X-ray"/>
    <property type="resolution" value="2.90 A"/>
    <property type="chains" value="A/B=29-500"/>
</dbReference>
<dbReference type="PDB" id="3KU9">
    <property type="method" value="X-ray"/>
    <property type="resolution" value="3.20 A"/>
    <property type="chains" value="A/B=29-500"/>
</dbReference>
<dbReference type="PDB" id="3L1R">
    <property type="method" value="X-ray"/>
    <property type="resolution" value="3.20 A"/>
    <property type="chains" value="A/B=29-500"/>
</dbReference>
<dbReference type="PDBsum" id="1B37"/>
<dbReference type="PDBsum" id="1B5Q"/>
<dbReference type="PDBsum" id="1H81"/>
<dbReference type="PDBsum" id="1H82"/>
<dbReference type="PDBsum" id="1H83"/>
<dbReference type="PDBsum" id="1H84"/>
<dbReference type="PDBsum" id="1H86"/>
<dbReference type="PDBsum" id="3KPF"/>
<dbReference type="PDBsum" id="3KU9"/>
<dbReference type="PDBsum" id="3L1R"/>
<dbReference type="SMR" id="O64411"/>
<dbReference type="FunCoup" id="O64411">
    <property type="interactions" value="22"/>
</dbReference>
<dbReference type="STRING" id="4577.O64411"/>
<dbReference type="BindingDB" id="O64411"/>
<dbReference type="ChEMBL" id="CHEMBL6108"/>
<dbReference type="Allergome" id="955">
    <property type="allergen name" value="Zea m PAO"/>
</dbReference>
<dbReference type="GlyCosmos" id="O64411">
    <property type="glycosylation" value="1 site, No reported glycans"/>
</dbReference>
<dbReference type="iPTMnet" id="O64411"/>
<dbReference type="PaxDb" id="4577-GRMZM2G034152_P01"/>
<dbReference type="GeneID" id="541983"/>
<dbReference type="KEGG" id="zma:541983"/>
<dbReference type="eggNOG" id="KOG0029">
    <property type="taxonomic scope" value="Eukaryota"/>
</dbReference>
<dbReference type="InParanoid" id="O64411"/>
<dbReference type="OrthoDB" id="5046242at2759"/>
<dbReference type="BioCyc" id="MetaCyc:MONOMER-9461"/>
<dbReference type="BRENDA" id="1.5.3.14">
    <property type="organism ID" value="6752"/>
</dbReference>
<dbReference type="SABIO-RK" id="O64411"/>
<dbReference type="UniPathway" id="UPA00211"/>
<dbReference type="EvolutionaryTrace" id="O64411"/>
<dbReference type="PRO" id="PR:O64411"/>
<dbReference type="Proteomes" id="UP000007305">
    <property type="component" value="Unplaced"/>
</dbReference>
<dbReference type="ExpressionAtlas" id="O64411">
    <property type="expression patterns" value="baseline and differential"/>
</dbReference>
<dbReference type="GO" id="GO:0048046">
    <property type="term" value="C:apoplast"/>
    <property type="evidence" value="ECO:0000314"/>
    <property type="project" value="UniProtKB"/>
</dbReference>
<dbReference type="GO" id="GO:0009505">
    <property type="term" value="C:plant-type cell wall"/>
    <property type="evidence" value="ECO:0000314"/>
    <property type="project" value="UniProtKB"/>
</dbReference>
<dbReference type="GO" id="GO:0050660">
    <property type="term" value="F:flavin adenine dinucleotide binding"/>
    <property type="evidence" value="ECO:0000314"/>
    <property type="project" value="UniProtKB"/>
</dbReference>
<dbReference type="GO" id="GO:0052897">
    <property type="term" value="F:N8-acetylspermidine:oxygen oxidoreductase (propane-1,3-diamine-forming) activity"/>
    <property type="evidence" value="ECO:0007669"/>
    <property type="project" value="UniProtKB-EC"/>
</dbReference>
<dbReference type="GO" id="GO:0046592">
    <property type="term" value="F:polyamine oxidase activity"/>
    <property type="evidence" value="ECO:0000314"/>
    <property type="project" value="UniProtKB"/>
</dbReference>
<dbReference type="GO" id="GO:0052900">
    <property type="term" value="F:spermine oxidase (propane-1,3-diamine-forming) activity"/>
    <property type="evidence" value="ECO:0007669"/>
    <property type="project" value="UniProtKB-EC"/>
</dbReference>
<dbReference type="GO" id="GO:0006598">
    <property type="term" value="P:polyamine catabolic process"/>
    <property type="evidence" value="ECO:0000314"/>
    <property type="project" value="UniProtKB"/>
</dbReference>
<dbReference type="GO" id="GO:0046208">
    <property type="term" value="P:spermine catabolic process"/>
    <property type="evidence" value="ECO:0007669"/>
    <property type="project" value="UniProtKB-UniPathway"/>
</dbReference>
<dbReference type="FunFam" id="3.90.660.10:FF:000089">
    <property type="match status" value="1"/>
</dbReference>
<dbReference type="FunFam" id="3.90.660.10:FF:000012">
    <property type="entry name" value="Polyamine oxidase 1"/>
    <property type="match status" value="1"/>
</dbReference>
<dbReference type="Gene3D" id="3.90.660.10">
    <property type="match status" value="1"/>
</dbReference>
<dbReference type="Gene3D" id="3.50.50.60">
    <property type="entry name" value="FAD/NAD(P)-binding domain"/>
    <property type="match status" value="1"/>
</dbReference>
<dbReference type="InterPro" id="IPR002937">
    <property type="entry name" value="Amino_oxidase"/>
</dbReference>
<dbReference type="InterPro" id="IPR036188">
    <property type="entry name" value="FAD/NAD-bd_sf"/>
</dbReference>
<dbReference type="InterPro" id="IPR001613">
    <property type="entry name" value="Flavin_amine_oxidase"/>
</dbReference>
<dbReference type="InterPro" id="IPR050281">
    <property type="entry name" value="Flavin_monoamine_oxidase"/>
</dbReference>
<dbReference type="PANTHER" id="PTHR10742:SF313">
    <property type="entry name" value="AMINE OXIDASE"/>
    <property type="match status" value="1"/>
</dbReference>
<dbReference type="PANTHER" id="PTHR10742">
    <property type="entry name" value="FLAVIN MONOAMINE OXIDASE"/>
    <property type="match status" value="1"/>
</dbReference>
<dbReference type="Pfam" id="PF01593">
    <property type="entry name" value="Amino_oxidase"/>
    <property type="match status" value="1"/>
</dbReference>
<dbReference type="PRINTS" id="PR00757">
    <property type="entry name" value="AMINEOXDASEF"/>
</dbReference>
<dbReference type="SUPFAM" id="SSF54373">
    <property type="entry name" value="FAD-linked reductases, C-terminal domain"/>
    <property type="match status" value="1"/>
</dbReference>
<dbReference type="SUPFAM" id="SSF51905">
    <property type="entry name" value="FAD/NAD(P)-binding domain"/>
    <property type="match status" value="1"/>
</dbReference>
<sequence>MSSSPSFGLLAVAALLLALSLAQHGSLAATVGPRVIVVGAGMSGISAAKRLSEAGITDLLILEATDHIGGRMHKTNFAGINVELGANWVEGVNGGKMNPIWPIVNSTLKLRNFRSDFDYLAQNVYKEDGGVYDEDYVQKRIELADSVEEMGEKLSATLHASGRDDMSILAMQRLNEHQPNGPATPVDMVVDYYKFDYEFAEPPRVTSLQNTVPLATFSDFGDDVYFVADQRGYEAVVYYLAGQYLKTDDKSGKIVDPRLQLNKVVREIKYSPGGVTVKTEDNSVYSADYVMVSASLGVLQSDLIQFKPKLPTWKVRAIYQFDMAVYTKIFLKFPRKFWPEGKGREFFLYASSRRGYYGVWQEFEKQYPDANVLLVTVTDEESRRIEQQSDEQTKAEIMQVLRKMFPGKDVPDATDILVPRWWSDRFYKGTFSNWPVGVNRYEYDQLRAPVGRVYFTGEHTSEHYNGYVHGAYLSGIDSAEILINCAQKKMCKYHVQGKYD</sequence>
<reference key="1">
    <citation type="journal article" date="1998" name="FEBS Lett.">
        <title>Maize polyamine oxidase: primary structure from protein and cDNA sequencing.</title>
        <authorList>
            <person name="Tavladoraki P."/>
            <person name="Schinina M.E."/>
            <person name="Cecconi F."/>
            <person name="Di Agostino S."/>
            <person name="Manera F."/>
            <person name="Rea G."/>
            <person name="Mariottini P."/>
            <person name="Federico R."/>
            <person name="Angelini R."/>
        </authorList>
    </citation>
    <scope>NUCLEOTIDE SEQUENCE [MRNA]</scope>
    <scope>PROTEIN SEQUENCE OF 29-93; 97-111; 115-147; 150-152; 154-162; 164-225; 227-241; 254-266; 270-278; 292-314; 317-323; 329-332; 343-352; 355-383; 385-394; 404-459; 461-471; 477-487 AND 493-496</scope>
    <source>
        <strain>cv. Paolo</strain>
        <tissue>Etiolated seedling</tissue>
    </source>
</reference>
<reference key="2">
    <citation type="journal article" date="2000" name="Plant Physiol. Biochem.">
        <title>Isolation and characterization of three polyamine oxidase genes from Zea mays.</title>
        <authorList>
            <person name="Cervelli M."/>
            <person name="Tavladoraki P."/>
            <person name="Di Agostino S."/>
            <person name="Angelini R."/>
            <person name="Federico R."/>
            <person name="Mariottini P."/>
        </authorList>
    </citation>
    <scope>NUCLEOTIDE SEQUENCE [GENOMIC DNA]</scope>
    <source>
        <strain>cv. Paolo</strain>
    </source>
</reference>
<reference key="3">
    <citation type="journal article" date="1989" name="Phytochemistry">
        <title>Properties of the polyamine oxidase from the cell wall of maize seedlings.</title>
        <authorList>
            <person name="Federico R."/>
            <person name="Alisi C."/>
            <person name="Forlani F."/>
        </authorList>
    </citation>
    <scope>SUBUNIT</scope>
    <scope>COFACTOR</scope>
</reference>
<reference key="4">
    <citation type="journal article" date="1996" name="Phytochemistry">
        <title>Oxidation of acetylpolyamines by maize polyamine oxidase.</title>
        <authorList>
            <person name="Federico R."/>
            <person name="Ercolini L."/>
            <person name="Laurenzi M."/>
            <person name="Angelini R."/>
        </authorList>
    </citation>
    <scope>FUNCTION</scope>
    <scope>CATALYTIC ACTIVITY</scope>
    <scope>BIOPHYSICOCHEMICAL PROPERTIES</scope>
</reference>
<reference key="5">
    <citation type="journal article" date="2003" name="Plant Physiol.">
        <title>Polyamine oxidase, a hydrogen peroxide-producing enzyme, is up-regulated by light and down-regulated by auxin in the outer tissues of the maize mesocotyl.</title>
        <authorList>
            <person name="Cona A."/>
            <person name="Cenci F."/>
            <person name="Cervelli M."/>
            <person name="Federico R."/>
            <person name="Mariottini P."/>
            <person name="Moreno S."/>
            <person name="Angelini R."/>
        </authorList>
    </citation>
    <scope>SUBCELLULAR LOCATION</scope>
    <scope>INDUCTION</scope>
</reference>
<reference key="6">
    <citation type="journal article" date="2005" name="Biochemistry">
        <title>Lys300 plays a major role in the catalytic mechanism of maize polyamine oxidase.</title>
        <authorList>
            <person name="Polticelli F."/>
            <person name="Basran J."/>
            <person name="Faso C."/>
            <person name="Cona A."/>
            <person name="Minervini G."/>
            <person name="Angelini R."/>
            <person name="Federico R."/>
            <person name="Scrutton N.S."/>
            <person name="Tavladoraki P."/>
        </authorList>
    </citation>
    <scope>FUNCTION</scope>
    <scope>COFACTOR</scope>
    <scope>BIOPHYSICOCHEMICAL PROPERTIES</scope>
    <scope>MUTAGENESIS OF LYS-328</scope>
</reference>
<reference key="7">
    <citation type="journal article" date="1998" name="Acta Crystallogr. D">
        <title>Crystallization and preliminary X-ray analysis of polyamine oxidase from Zea mays L.</title>
        <authorList>
            <person name="Binda C."/>
            <person name="Coda A."/>
            <person name="Angelini R."/>
            <person name="Federico R."/>
            <person name="Ascenzi P."/>
            <person name="Mattevi A."/>
        </authorList>
    </citation>
    <scope>X-RAY CRYSTALLOGRAPHY (2.70 ANGSTROMS)</scope>
    <scope>CRYSTALLIZATION</scope>
</reference>
<reference key="8">
    <citation type="journal article" date="1999" name="Structure">
        <title>A 30-A-long U-shaped catalytic tunnel in the crystal structure of polyamine oxidase.</title>
        <authorList>
            <person name="Binda C."/>
            <person name="Coda A."/>
            <person name="Angelini R."/>
            <person name="Federico R."/>
            <person name="Ascenzi P."/>
            <person name="Mattevi A."/>
        </authorList>
    </citation>
    <scope>X-RAY CRYSTALLOGRAPHY (1.90 ANGSTROMS) OF 29-500 IN COMPLEXES WITH FAD AND SYNTHETIC INHIBITORS</scope>
    <scope>GLYCOSYLATION AT ASN-105</scope>
    <scope>DISULFIDE BOND</scope>
</reference>
<reference key="9">
    <citation type="journal article" date="2001" name="Biochemistry">
        <title>Structural bases for inhibitor binding and catalysis in polyamine oxidase.</title>
        <authorList>
            <person name="Binda C."/>
            <person name="Angelini R."/>
            <person name="Federico R."/>
            <person name="Ascenzi P."/>
            <person name="Mattevi A."/>
        </authorList>
    </citation>
    <scope>X-RAY CRYSTALLOGRAPHY (1.90 ANGSTROMS) OF 29-500 IN COMPLEXES WITH FAD AND SYNTHETIC INHIBITORS</scope>
    <scope>GLYCOSYLATION AT ASN-105</scope>
    <scope>DISULFIDE BOND</scope>
</reference>
<reference key="10">
    <citation type="submission" date="2009-11" db="PDB data bank">
        <title>The crystal structure of the mutant Lys300Met of polyamine oxidase from Zea Mays unveils the role of Lys300 in catalysis.</title>
        <authorList>
            <person name="Fiorillo A."/>
            <person name="Ilari A."/>
            <person name="Tavladoraki P."/>
        </authorList>
    </citation>
    <scope>X-RAY CRYSTALLOGRAPHY (3.20 ANGSTROMS) OF 29-500 IN COMPLEX WITH SPERMINE AND SPERMIDINE</scope>
</reference>
<gene>
    <name evidence="11" type="primary">MPAO1</name>
    <name evidence="9" type="synonym">MPAO</name>
    <name evidence="10" type="synonym">PAO</name>
</gene>
<keyword id="KW-0002">3D-structure</keyword>
<keyword id="KW-0052">Apoplast</keyword>
<keyword id="KW-0134">Cell wall</keyword>
<keyword id="KW-0903">Direct protein sequencing</keyword>
<keyword id="KW-1015">Disulfide bond</keyword>
<keyword id="KW-0274">FAD</keyword>
<keyword id="KW-0285">Flavoprotein</keyword>
<keyword id="KW-0325">Glycoprotein</keyword>
<keyword id="KW-0560">Oxidoreductase</keyword>
<keyword id="KW-1185">Reference proteome</keyword>
<keyword id="KW-0964">Secreted</keyword>
<keyword id="KW-0732">Signal</keyword>
<protein>
    <recommendedName>
        <fullName evidence="11">Polyamine oxidase 1</fullName>
        <ecNumber evidence="8">1.5.3.14</ecNumber>
        <ecNumber evidence="8">1.5.3.15</ecNumber>
    </recommendedName>
</protein>